<name>M3K21_HUMAN</name>
<dbReference type="EC" id="2.7.11.25"/>
<dbReference type="EMBL" id="AJ311797">
    <property type="protein sequence ID" value="CAC84639.1"/>
    <property type="molecule type" value="mRNA"/>
</dbReference>
<dbReference type="EMBL" id="AJ311798">
    <property type="protein sequence ID" value="CAC84640.1"/>
    <property type="molecule type" value="mRNA"/>
</dbReference>
<dbReference type="EMBL" id="AB058707">
    <property type="protein sequence ID" value="BAB47433.1"/>
    <property type="status" value="ALT_INIT"/>
    <property type="molecule type" value="mRNA"/>
</dbReference>
<dbReference type="EMBL" id="AL133380">
    <property type="status" value="NOT_ANNOTATED_CDS"/>
    <property type="molecule type" value="Genomic_DNA"/>
</dbReference>
<dbReference type="EMBL" id="CH471098">
    <property type="protein sequence ID" value="EAW69988.1"/>
    <property type="molecule type" value="Genomic_DNA"/>
</dbReference>
<dbReference type="EMBL" id="BC136648">
    <property type="protein sequence ID" value="AAI36649.1"/>
    <property type="molecule type" value="mRNA"/>
</dbReference>
<dbReference type="EMBL" id="BC136649">
    <property type="protein sequence ID" value="AAI36650.1"/>
    <property type="molecule type" value="mRNA"/>
</dbReference>
<dbReference type="CCDS" id="CCDS1598.1">
    <molecule id="Q5TCX8-1"/>
</dbReference>
<dbReference type="RefSeq" id="NP_115811.2">
    <molecule id="Q5TCX8-1"/>
    <property type="nucleotide sequence ID" value="NM_032435.3"/>
</dbReference>
<dbReference type="PDB" id="4UYA">
    <property type="method" value="X-ray"/>
    <property type="resolution" value="2.80 A"/>
    <property type="chains" value="A=115-451"/>
</dbReference>
<dbReference type="PDBsum" id="4UYA"/>
<dbReference type="SMR" id="Q5TCX8"/>
<dbReference type="BioGRID" id="124089">
    <property type="interactions" value="121"/>
</dbReference>
<dbReference type="FunCoup" id="Q5TCX8">
    <property type="interactions" value="634"/>
</dbReference>
<dbReference type="IntAct" id="Q5TCX8">
    <property type="interactions" value="46"/>
</dbReference>
<dbReference type="STRING" id="9606.ENSP00000355583"/>
<dbReference type="BindingDB" id="Q5TCX8"/>
<dbReference type="ChEMBL" id="CHEMBL3627584"/>
<dbReference type="GlyGen" id="Q5TCX8">
    <property type="glycosylation" value="1 site, 1 O-linked glycan (1 site)"/>
</dbReference>
<dbReference type="iPTMnet" id="Q5TCX8"/>
<dbReference type="PhosphoSitePlus" id="Q5TCX8"/>
<dbReference type="BioMuta" id="MAP3K21"/>
<dbReference type="DMDM" id="71153820"/>
<dbReference type="jPOST" id="Q5TCX8"/>
<dbReference type="MassIVE" id="Q5TCX8"/>
<dbReference type="PaxDb" id="9606-ENSP00000355583"/>
<dbReference type="PeptideAtlas" id="Q5TCX8"/>
<dbReference type="ProteomicsDB" id="64992">
    <molecule id="Q5TCX8-1"/>
</dbReference>
<dbReference type="ProteomicsDB" id="64993">
    <molecule id="Q5TCX8-2"/>
</dbReference>
<dbReference type="ProteomicsDB" id="64994">
    <molecule id="Q5TCX8-3"/>
</dbReference>
<dbReference type="Pumba" id="Q5TCX8"/>
<dbReference type="Antibodypedia" id="2080">
    <property type="antibodies" value="218 antibodies from 30 providers"/>
</dbReference>
<dbReference type="DNASU" id="84451"/>
<dbReference type="Ensembl" id="ENST00000366622.1">
    <molecule id="Q5TCX8-3"/>
    <property type="protein sequence ID" value="ENSP00000355581.1"/>
    <property type="gene ID" value="ENSG00000143674.11"/>
</dbReference>
<dbReference type="Ensembl" id="ENST00000366623.7">
    <molecule id="Q5TCX8-2"/>
    <property type="protein sequence ID" value="ENSP00000355582.3"/>
    <property type="gene ID" value="ENSG00000143674.11"/>
</dbReference>
<dbReference type="Ensembl" id="ENST00000366624.8">
    <molecule id="Q5TCX8-1"/>
    <property type="protein sequence ID" value="ENSP00000355583.3"/>
    <property type="gene ID" value="ENSG00000143674.11"/>
</dbReference>
<dbReference type="GeneID" id="84451"/>
<dbReference type="KEGG" id="hsa:84451"/>
<dbReference type="MANE-Select" id="ENST00000366624.8">
    <property type="protein sequence ID" value="ENSP00000355583.3"/>
    <property type="RefSeq nucleotide sequence ID" value="NM_032435.3"/>
    <property type="RefSeq protein sequence ID" value="NP_115811.2"/>
</dbReference>
<dbReference type="UCSC" id="uc001hvt.4">
    <molecule id="Q5TCX8-1"/>
    <property type="organism name" value="human"/>
</dbReference>
<dbReference type="AGR" id="HGNC:29798"/>
<dbReference type="CTD" id="84451"/>
<dbReference type="DisGeNET" id="84451"/>
<dbReference type="GeneCards" id="MAP3K21"/>
<dbReference type="HGNC" id="HGNC:29798">
    <property type="gene designation" value="MAP3K21"/>
</dbReference>
<dbReference type="HPA" id="ENSG00000143674">
    <property type="expression patterns" value="Tissue enhanced (pancreas)"/>
</dbReference>
<dbReference type="MIM" id="614793">
    <property type="type" value="gene"/>
</dbReference>
<dbReference type="neXtProt" id="NX_Q5TCX8"/>
<dbReference type="OpenTargets" id="ENSG00000143674"/>
<dbReference type="VEuPathDB" id="HostDB:ENSG00000143674"/>
<dbReference type="eggNOG" id="KOG0192">
    <property type="taxonomic scope" value="Eukaryota"/>
</dbReference>
<dbReference type="GeneTree" id="ENSGT00940000159629"/>
<dbReference type="InParanoid" id="Q5TCX8"/>
<dbReference type="OMA" id="KDRASHH"/>
<dbReference type="OrthoDB" id="339325at2759"/>
<dbReference type="PAN-GO" id="Q5TCX8">
    <property type="GO annotations" value="3 GO annotations based on evolutionary models"/>
</dbReference>
<dbReference type="PhylomeDB" id="Q5TCX8"/>
<dbReference type="BRENDA" id="2.7.11.25">
    <property type="organism ID" value="2681"/>
</dbReference>
<dbReference type="PathwayCommons" id="Q5TCX8"/>
<dbReference type="SignaLink" id="Q5TCX8"/>
<dbReference type="SIGNOR" id="Q5TCX8"/>
<dbReference type="BioGRID-ORCS" id="84451">
    <property type="hits" value="13 hits in 1142 CRISPR screens"/>
</dbReference>
<dbReference type="CD-CODE" id="91857CE7">
    <property type="entry name" value="Nucleolus"/>
</dbReference>
<dbReference type="ChiTaRS" id="MAP3K21">
    <property type="organism name" value="human"/>
</dbReference>
<dbReference type="EvolutionaryTrace" id="Q5TCX8"/>
<dbReference type="GenomeRNAi" id="84451"/>
<dbReference type="Pharos" id="Q5TCX8">
    <property type="development level" value="Tbio"/>
</dbReference>
<dbReference type="PRO" id="PR:Q5TCX8"/>
<dbReference type="Proteomes" id="UP000005640">
    <property type="component" value="Chromosome 1"/>
</dbReference>
<dbReference type="RNAct" id="Q5TCX8">
    <property type="molecule type" value="protein"/>
</dbReference>
<dbReference type="Bgee" id="ENSG00000143674">
    <property type="expression patterns" value="Expressed in kidney epithelium and 130 other cell types or tissues"/>
</dbReference>
<dbReference type="GO" id="GO:0005737">
    <property type="term" value="C:cytoplasm"/>
    <property type="evidence" value="ECO:0000318"/>
    <property type="project" value="GO_Central"/>
</dbReference>
<dbReference type="GO" id="GO:0005524">
    <property type="term" value="F:ATP binding"/>
    <property type="evidence" value="ECO:0007669"/>
    <property type="project" value="UniProtKB-KW"/>
</dbReference>
<dbReference type="GO" id="GO:0004706">
    <property type="term" value="F:JUN kinase kinase kinase activity"/>
    <property type="evidence" value="ECO:0000250"/>
    <property type="project" value="UniProtKB"/>
</dbReference>
<dbReference type="GO" id="GO:0042803">
    <property type="term" value="F:protein homodimerization activity"/>
    <property type="evidence" value="ECO:0000250"/>
    <property type="project" value="UniProtKB"/>
</dbReference>
<dbReference type="GO" id="GO:0004672">
    <property type="term" value="F:protein kinase activity"/>
    <property type="evidence" value="ECO:0000318"/>
    <property type="project" value="GO_Central"/>
</dbReference>
<dbReference type="GO" id="GO:0106310">
    <property type="term" value="F:protein serine kinase activity"/>
    <property type="evidence" value="ECO:0007669"/>
    <property type="project" value="RHEA"/>
</dbReference>
<dbReference type="GO" id="GO:0046777">
    <property type="term" value="P:protein autophosphorylation"/>
    <property type="evidence" value="ECO:0000250"/>
    <property type="project" value="UniProtKB"/>
</dbReference>
<dbReference type="GO" id="GO:0006468">
    <property type="term" value="P:protein phosphorylation"/>
    <property type="evidence" value="ECO:0000250"/>
    <property type="project" value="UniProtKB"/>
</dbReference>
<dbReference type="GO" id="GO:0007165">
    <property type="term" value="P:signal transduction"/>
    <property type="evidence" value="ECO:0000318"/>
    <property type="project" value="GO_Central"/>
</dbReference>
<dbReference type="CDD" id="cd12058">
    <property type="entry name" value="SH3_MLK4"/>
    <property type="match status" value="1"/>
</dbReference>
<dbReference type="FunFam" id="1.10.510.10:FF:000076">
    <property type="entry name" value="Mitogen-activated protein kinase kinase kinase"/>
    <property type="match status" value="1"/>
</dbReference>
<dbReference type="FunFam" id="2.30.30.40:FF:000169">
    <property type="entry name" value="Mitogen-activated protein kinase kinase kinase"/>
    <property type="match status" value="1"/>
</dbReference>
<dbReference type="FunFam" id="3.30.200.20:FF:000085">
    <property type="entry name" value="Mitogen-activated protein kinase kinase kinase"/>
    <property type="match status" value="1"/>
</dbReference>
<dbReference type="Gene3D" id="3.30.200.20">
    <property type="entry name" value="Phosphorylase Kinase, domain 1"/>
    <property type="match status" value="1"/>
</dbReference>
<dbReference type="Gene3D" id="2.30.30.40">
    <property type="entry name" value="SH3 Domains"/>
    <property type="match status" value="1"/>
</dbReference>
<dbReference type="Gene3D" id="1.10.510.10">
    <property type="entry name" value="Transferase(Phosphotransferase) domain 1"/>
    <property type="match status" value="1"/>
</dbReference>
<dbReference type="InterPro" id="IPR011009">
    <property type="entry name" value="Kinase-like_dom_sf"/>
</dbReference>
<dbReference type="InterPro" id="IPR016231">
    <property type="entry name" value="MLK1-4"/>
</dbReference>
<dbReference type="InterPro" id="IPR000719">
    <property type="entry name" value="Prot_kinase_dom"/>
</dbReference>
<dbReference type="InterPro" id="IPR017441">
    <property type="entry name" value="Protein_kinase_ATP_BS"/>
</dbReference>
<dbReference type="InterPro" id="IPR001245">
    <property type="entry name" value="Ser-Thr/Tyr_kinase_cat_dom"/>
</dbReference>
<dbReference type="InterPro" id="IPR008271">
    <property type="entry name" value="Ser/Thr_kinase_AS"/>
</dbReference>
<dbReference type="InterPro" id="IPR051681">
    <property type="entry name" value="Ser/Thr_Kinases-Pseudokinases"/>
</dbReference>
<dbReference type="InterPro" id="IPR036028">
    <property type="entry name" value="SH3-like_dom_sf"/>
</dbReference>
<dbReference type="InterPro" id="IPR001452">
    <property type="entry name" value="SH3_domain"/>
</dbReference>
<dbReference type="PANTHER" id="PTHR44329:SF30">
    <property type="entry name" value="MITOGEN-ACTIVATED PROTEIN KINASE KINASE KINASE 21"/>
    <property type="match status" value="1"/>
</dbReference>
<dbReference type="PANTHER" id="PTHR44329">
    <property type="entry name" value="SERINE/THREONINE-PROTEIN KINASE TNNI3K-RELATED"/>
    <property type="match status" value="1"/>
</dbReference>
<dbReference type="Pfam" id="PF07714">
    <property type="entry name" value="PK_Tyr_Ser-Thr"/>
    <property type="match status" value="1"/>
</dbReference>
<dbReference type="Pfam" id="PF14604">
    <property type="entry name" value="SH3_9"/>
    <property type="match status" value="1"/>
</dbReference>
<dbReference type="PIRSF" id="PIRSF000556">
    <property type="entry name" value="MAPKKK9_11"/>
    <property type="match status" value="1"/>
</dbReference>
<dbReference type="PRINTS" id="PR00452">
    <property type="entry name" value="SH3DOMAIN"/>
</dbReference>
<dbReference type="PRINTS" id="PR00109">
    <property type="entry name" value="TYRKINASE"/>
</dbReference>
<dbReference type="SMART" id="SM00220">
    <property type="entry name" value="S_TKc"/>
    <property type="match status" value="1"/>
</dbReference>
<dbReference type="SMART" id="SM00326">
    <property type="entry name" value="SH3"/>
    <property type="match status" value="1"/>
</dbReference>
<dbReference type="SUPFAM" id="SSF56112">
    <property type="entry name" value="Protein kinase-like (PK-like)"/>
    <property type="match status" value="1"/>
</dbReference>
<dbReference type="SUPFAM" id="SSF50044">
    <property type="entry name" value="SH3-domain"/>
    <property type="match status" value="1"/>
</dbReference>
<dbReference type="PROSITE" id="PS00107">
    <property type="entry name" value="PROTEIN_KINASE_ATP"/>
    <property type="match status" value="1"/>
</dbReference>
<dbReference type="PROSITE" id="PS50011">
    <property type="entry name" value="PROTEIN_KINASE_DOM"/>
    <property type="match status" value="1"/>
</dbReference>
<dbReference type="PROSITE" id="PS00108">
    <property type="entry name" value="PROTEIN_KINASE_ST"/>
    <property type="match status" value="1"/>
</dbReference>
<dbReference type="PROSITE" id="PS50002">
    <property type="entry name" value="SH3"/>
    <property type="match status" value="1"/>
</dbReference>
<gene>
    <name evidence="19" type="primary">MAP3K21</name>
    <name evidence="16" type="synonym">KIAA1804</name>
    <name evidence="14" type="synonym">MLK4</name>
</gene>
<protein>
    <recommendedName>
        <fullName>Mitogen-activated protein kinase kinase kinase 21</fullName>
        <ecNumber>2.7.11.25</ecNumber>
    </recommendedName>
    <alternativeName>
        <fullName>Mitogen-activated protein kinase kinase kinase MLK4</fullName>
    </alternativeName>
    <alternativeName>
        <fullName>Mixed lineage kinase 4</fullName>
    </alternativeName>
</protein>
<feature type="chain" id="PRO_0000086268" description="Mitogen-activated protein kinase kinase kinase 21">
    <location>
        <begin position="1"/>
        <end position="1036"/>
    </location>
</feature>
<feature type="domain" description="SH3" evidence="7">
    <location>
        <begin position="38"/>
        <end position="102"/>
    </location>
</feature>
<feature type="domain" description="Protein kinase" evidence="6">
    <location>
        <begin position="124"/>
        <end position="401"/>
    </location>
</feature>
<feature type="region of interest" description="Disordered" evidence="9">
    <location>
        <begin position="1"/>
        <end position="36"/>
    </location>
</feature>
<feature type="region of interest" description="Leucine-zipper 1">
    <location>
        <begin position="425"/>
        <end position="446"/>
    </location>
</feature>
<feature type="region of interest" description="Leucine-zipper 2">
    <location>
        <begin position="460"/>
        <end position="481"/>
    </location>
</feature>
<feature type="region of interest" description="Disordered" evidence="9">
    <location>
        <begin position="517"/>
        <end position="551"/>
    </location>
</feature>
<feature type="region of interest" description="Disordered" evidence="9">
    <location>
        <begin position="748"/>
        <end position="791"/>
    </location>
</feature>
<feature type="region of interest" description="Disordered" evidence="9">
    <location>
        <begin position="923"/>
        <end position="954"/>
    </location>
</feature>
<feature type="compositionally biased region" description="Low complexity" evidence="9">
    <location>
        <begin position="15"/>
        <end position="36"/>
    </location>
</feature>
<feature type="compositionally biased region" description="Basic and acidic residues" evidence="9">
    <location>
        <begin position="748"/>
        <end position="763"/>
    </location>
</feature>
<feature type="active site" description="Proton acceptor" evidence="3 6 8">
    <location>
        <position position="263"/>
    </location>
</feature>
<feature type="binding site" evidence="3 6">
    <location>
        <begin position="130"/>
        <end position="138"/>
    </location>
    <ligand>
        <name>ATP</name>
        <dbReference type="ChEBI" id="CHEBI:30616"/>
    </ligand>
</feature>
<feature type="binding site" evidence="3 6">
    <location>
        <position position="151"/>
    </location>
    <ligand>
        <name>ATP</name>
        <dbReference type="ChEBI" id="CHEBI:30616"/>
    </ligand>
</feature>
<feature type="modified residue" description="Phosphothreonine; by autocatalysis" evidence="1">
    <location>
        <position position="299"/>
    </location>
</feature>
<feature type="modified residue" description="Phosphoserine; by autocatalysis and MAP4K1" evidence="1">
    <location>
        <position position="303"/>
    </location>
</feature>
<feature type="modified residue" description="Phosphoserine" evidence="21 22 23 24">
    <location>
        <position position="528"/>
    </location>
</feature>
<feature type="modified residue" description="Phosphoserine" evidence="5">
    <location>
        <position position="543"/>
    </location>
</feature>
<feature type="modified residue" description="Phosphoserine" evidence="5">
    <location>
        <position position="547"/>
    </location>
</feature>
<feature type="modified residue" description="Phosphothreonine" evidence="22">
    <location>
        <position position="592"/>
    </location>
</feature>
<feature type="modified residue" description="Phosphoserine" evidence="20 22 24">
    <location>
        <position position="614"/>
    </location>
</feature>
<feature type="splice variant" id="VSP_051731" description="In isoform 3." evidence="13">
    <location>
        <begin position="1"/>
        <end position="554"/>
    </location>
</feature>
<feature type="splice variant" id="VSP_051732" description="In isoform 3." evidence="13">
    <original>RAIQL</original>
    <variation>MFFLV</variation>
    <location>
        <begin position="555"/>
        <end position="559"/>
    </location>
</feature>
<feature type="splice variant" id="VSP_051733" description="In isoform 2." evidence="14">
    <original>LTSDESNKTWGR</original>
    <variation>CELSALPRGLLC</variation>
    <location>
        <begin position="559"/>
        <end position="570"/>
    </location>
</feature>
<feature type="splice variant" id="VSP_051734" description="In isoform 2." evidence="14">
    <location>
        <begin position="571"/>
        <end position="1036"/>
    </location>
</feature>
<feature type="sequence variant" id="VAR_040729" description="In dbSNP:rs35465006." evidence="10">
    <original>D</original>
    <variation>N</variation>
    <location>
        <position position="420"/>
    </location>
</feature>
<feature type="sequence variant" id="VAR_040730" description="In dbSNP:rs35758282." evidence="10">
    <original>E</original>
    <variation>D</variation>
    <location>
        <position position="563"/>
    </location>
</feature>
<feature type="sequence variant" id="VAR_040731" description="In dbSNP:rs34984140." evidence="10">
    <original>S</original>
    <variation>F</variation>
    <location>
        <position position="597"/>
    </location>
</feature>
<feature type="sequence variant" id="VAR_040732" description="In dbSNP:rs3795375." evidence="10">
    <original>V</original>
    <variation>I</variation>
    <location>
        <position position="728"/>
    </location>
</feature>
<feature type="sequence variant" id="VAR_040733" description="In dbSNP:rs3795374." evidence="10">
    <original>E</original>
    <variation>D</variation>
    <location>
        <position position="741"/>
    </location>
</feature>
<feature type="sequence variant" id="VAR_040734" description="In dbSNP:rs963981." evidence="10">
    <original>C</original>
    <variation>G</variation>
    <location>
        <position position="784"/>
    </location>
</feature>
<feature type="sequence variant" id="VAR_040735" description="In dbSNP:rs55681416." evidence="10">
    <original>R</original>
    <variation>W</variation>
    <location>
        <position position="892"/>
    </location>
</feature>
<feature type="sequence variant" id="VAR_040736" description="In dbSNP:rs34499091." evidence="10">
    <original>T</original>
    <variation>I</variation>
    <location>
        <position position="900"/>
    </location>
</feature>
<feature type="sequence variant" id="VAR_040737" description="In dbSNP:rs56065162." evidence="10">
    <original>R</original>
    <variation>C</variation>
    <location>
        <position position="977"/>
    </location>
</feature>
<feature type="sequence variant" id="VAR_040738" description="In dbSNP:rs34794284." evidence="10">
    <original>P</original>
    <variation>L</variation>
    <location>
        <position position="982"/>
    </location>
</feature>
<feature type="sequence conflict" description="In Ref. 1; CAC84639/CAC84640." evidence="15" ref="1">
    <original>K</original>
    <variation>E</variation>
    <location>
        <position position="274"/>
    </location>
</feature>
<feature type="sequence conflict" description="In Ref. 1; CAC84639/CAC84640." evidence="15" ref="1">
    <original>Y</original>
    <variation>C</variation>
    <location>
        <position position="330"/>
    </location>
</feature>
<feature type="sequence conflict" description="In Ref. 1; CAC84640." evidence="15" ref="1">
    <original>E</original>
    <variation>G</variation>
    <location>
        <position position="687"/>
    </location>
</feature>
<feature type="sequence conflict" description="In Ref. 1; CAC84640." evidence="15" ref="1">
    <original>S</original>
    <variation>T</variation>
    <location>
        <position position="701"/>
    </location>
</feature>
<feature type="sequence conflict" description="In Ref. 1; CAC84640." evidence="15" ref="1">
    <original>T</original>
    <variation>A</variation>
    <location>
        <position position="705"/>
    </location>
</feature>
<feature type="sequence conflict" description="In Ref. 1; CAC84640." evidence="15" ref="1">
    <original>P</original>
    <variation>S</variation>
    <location>
        <position position="781"/>
    </location>
</feature>
<feature type="sequence conflict" description="In Ref. 1; CAC84640." evidence="15" ref="1">
    <original>Q</original>
    <variation>R</variation>
    <location>
        <position position="872"/>
    </location>
</feature>
<feature type="sequence conflict" description="In Ref. 1; CAC84640." evidence="15" ref="1">
    <original>A</original>
    <variation>V</variation>
    <location>
        <position position="1002"/>
    </location>
</feature>
<feature type="sequence conflict" description="In Ref. 1; CAC84640." evidence="15" ref="1">
    <original>C</original>
    <variation>G</variation>
    <location>
        <position position="1016"/>
    </location>
</feature>
<feature type="helix" evidence="25">
    <location>
        <begin position="121"/>
        <end position="123"/>
    </location>
</feature>
<feature type="strand" evidence="25">
    <location>
        <begin position="125"/>
        <end position="129"/>
    </location>
</feature>
<feature type="strand" evidence="25">
    <location>
        <begin position="138"/>
        <end position="143"/>
    </location>
</feature>
<feature type="strand" evidence="25">
    <location>
        <begin position="146"/>
        <end position="152"/>
    </location>
</feature>
<feature type="helix" evidence="25">
    <location>
        <begin position="165"/>
        <end position="175"/>
    </location>
</feature>
<feature type="strand" evidence="25">
    <location>
        <begin position="186"/>
        <end position="190"/>
    </location>
</feature>
<feature type="strand" evidence="25">
    <location>
        <begin position="197"/>
        <end position="201"/>
    </location>
</feature>
<feature type="helix" evidence="25">
    <location>
        <begin position="208"/>
        <end position="212"/>
    </location>
</feature>
<feature type="helix" evidence="25">
    <location>
        <begin position="234"/>
        <end position="252"/>
    </location>
</feature>
<feature type="strand" evidence="25">
    <location>
        <begin position="255"/>
        <end position="257"/>
    </location>
</feature>
<feature type="helix" evidence="25">
    <location>
        <begin position="266"/>
        <end position="268"/>
    </location>
</feature>
<feature type="strand" evidence="25">
    <location>
        <begin position="269"/>
        <end position="273"/>
    </location>
</feature>
<feature type="strand" evidence="25">
    <location>
        <begin position="285"/>
        <end position="287"/>
    </location>
</feature>
<feature type="helix" evidence="25">
    <location>
        <begin position="313"/>
        <end position="316"/>
    </location>
</feature>
<feature type="helix" evidence="25">
    <location>
        <begin position="323"/>
        <end position="339"/>
    </location>
</feature>
<feature type="turn" evidence="25">
    <location>
        <begin position="343"/>
        <end position="346"/>
    </location>
</feature>
<feature type="helix" evidence="25">
    <location>
        <begin position="349"/>
        <end position="357"/>
    </location>
</feature>
<feature type="helix" evidence="25">
    <location>
        <begin position="373"/>
        <end position="380"/>
    </location>
</feature>
<feature type="helix" evidence="25">
    <location>
        <begin position="391"/>
        <end position="399"/>
    </location>
</feature>
<feature type="helix" evidence="25">
    <location>
        <begin position="411"/>
        <end position="436"/>
    </location>
</feature>
<feature type="sequence conflict" description="In Ref. 1; CAC84639." evidence="15" ref="1">
    <original>R</original>
    <variation>P</variation>
    <location sequence="Q5TCX8-2">
        <position position="566"/>
    </location>
</feature>
<organism>
    <name type="scientific">Homo sapiens</name>
    <name type="common">Human</name>
    <dbReference type="NCBI Taxonomy" id="9606"/>
    <lineage>
        <taxon>Eukaryota</taxon>
        <taxon>Metazoa</taxon>
        <taxon>Chordata</taxon>
        <taxon>Craniata</taxon>
        <taxon>Vertebrata</taxon>
        <taxon>Euteleostomi</taxon>
        <taxon>Mammalia</taxon>
        <taxon>Eutheria</taxon>
        <taxon>Euarchontoglires</taxon>
        <taxon>Primates</taxon>
        <taxon>Haplorrhini</taxon>
        <taxon>Catarrhini</taxon>
        <taxon>Hominidae</taxon>
        <taxon>Homo</taxon>
    </lineage>
</organism>
<accession>Q5TCX8</accession>
<accession>A0A1W2PKR9</accession>
<accession>B2RN34</accession>
<accession>Q5TCX7</accession>
<accession>Q5TCX9</accession>
<accession>Q8WWN1</accession>
<accession>Q8WWN2</accession>
<accession>Q96JM1</accession>
<accession>X6R610</accession>
<sequence>MALRGAAGATDTPVSSAGGAPGGSASSSSTSSGGSASAGAGLWAALYDYEARGEDELSLRRGQLVEVLSQDAAVSGDEGWWAGQVQRRLGIFPANYVAPCRPAASPAPPPSRPSSPVHVAFERLELKELIGAGGFGQVYRATWQGQEVAVKAARQDPEQDAAAAAESVRREARLFAMLRHPNIIELRGVCLQQPHLCLVLEFARGGALNRALAAANAAPDPRAPGPRRARRIPPHVLVNWAVQIARGMLYLHEEAFVPILHRDLKSSNILLLEKIEHDDICNKTLKITDFGLAREWHRTTKMSTAGTYAWMAPEVIKSSLFSKGSDIWSYGVLLWELLTGEVPYRGIDGLAVAYGVAVNKLTLPIPSTCPEPFAKLMKECWQQDPHIRPSFALILEQLTAIEGAVMTEMPQESFHSMQDDWKLEIQQMFDELRTKEKELRSREEELTRAALQQKSQEELLKRREQQLAEREIDVLERELNILIFQLNQEKPKVKKRKGKFKRSRLKLKDGHRISLPSDFQHKITVQASPNLDKRRSLNSSSSSPPSSPTMMPRLRAIQLTSDESNKTWGRNTVFRQEEFEDVKRNFKKKGCTWGPNSIQMKDRTDCKERIRPLSDGNSPWSTILIKNQKTMPLASLFVDQPGSCEEPKLSPDGLEHRKPKQIKLPSQAYIDLPLGKDAQRENPAEAESWEEAASANAATVSIEMTPTNSLSRSPQRKKTESALYGCTVLLASVALGLDLRELHKAQAAEEPLPKEEKKKREGIFQRASKSRRSASPPTSLPSTCGEASSPPSLPLSSALGILSTPSFSTKCLLQMDSEDPLVDSAPVTCDSEMLTPDFCPTAPGSGREPALMPRLDTDCSVSRNLPSSFLQQTCGNVPYCASSKHRPSHHRRTMSDGNPTPTGATIISATGASALPLCPSPAPHSHLPREVSPKKHSTVHIVPQRRPASLRSRSDLPQAYPQTAVSQLAQTACVVGRPGPHPTQFLAAKERTKSHVPSLLDADVEGQSRDYTVPLCRMRSKTSRPSIYELEKEFLS</sequence>
<evidence type="ECO:0000250" key="1"/>
<evidence type="ECO:0000250" key="2">
    <source>
        <dbReference type="UniProtKB" id="P80192"/>
    </source>
</evidence>
<evidence type="ECO:0000250" key="3">
    <source>
        <dbReference type="UniProtKB" id="Q02779"/>
    </source>
</evidence>
<evidence type="ECO:0000250" key="4">
    <source>
        <dbReference type="UniProtKB" id="Q16584"/>
    </source>
</evidence>
<evidence type="ECO:0000250" key="5">
    <source>
        <dbReference type="UniProtKB" id="Q8VDG6"/>
    </source>
</evidence>
<evidence type="ECO:0000255" key="6">
    <source>
        <dbReference type="PROSITE-ProRule" id="PRU00159"/>
    </source>
</evidence>
<evidence type="ECO:0000255" key="7">
    <source>
        <dbReference type="PROSITE-ProRule" id="PRU00192"/>
    </source>
</evidence>
<evidence type="ECO:0000255" key="8">
    <source>
        <dbReference type="PROSITE-ProRule" id="PRU10027"/>
    </source>
</evidence>
<evidence type="ECO:0000256" key="9">
    <source>
        <dbReference type="SAM" id="MobiDB-lite"/>
    </source>
</evidence>
<evidence type="ECO:0000269" key="10">
    <source>
    </source>
</evidence>
<evidence type="ECO:0000269" key="11">
    <source>
    </source>
</evidence>
<evidence type="ECO:0000269" key="12">
    <source ref="1"/>
</evidence>
<evidence type="ECO:0000303" key="13">
    <source>
    </source>
</evidence>
<evidence type="ECO:0000303" key="14">
    <source ref="1"/>
</evidence>
<evidence type="ECO:0000305" key="15"/>
<evidence type="ECO:0000312" key="16">
    <source>
        <dbReference type="EMBL" id="BAB47433.1"/>
    </source>
</evidence>
<evidence type="ECO:0000312" key="17">
    <source>
        <dbReference type="EMBL" id="CAC84639.1"/>
    </source>
</evidence>
<evidence type="ECO:0000312" key="18">
    <source>
        <dbReference type="EMBL" id="CAC84640.1"/>
    </source>
</evidence>
<evidence type="ECO:0000312" key="19">
    <source>
        <dbReference type="HGNC" id="HGNC:29798"/>
    </source>
</evidence>
<evidence type="ECO:0007744" key="20">
    <source>
    </source>
</evidence>
<evidence type="ECO:0007744" key="21">
    <source>
    </source>
</evidence>
<evidence type="ECO:0007744" key="22">
    <source>
    </source>
</evidence>
<evidence type="ECO:0007744" key="23">
    <source>
    </source>
</evidence>
<evidence type="ECO:0007744" key="24">
    <source>
    </source>
</evidence>
<evidence type="ECO:0007829" key="25">
    <source>
        <dbReference type="PDB" id="4UYA"/>
    </source>
</evidence>
<reference evidence="15 18" key="1">
    <citation type="submission" date="2001-04" db="EMBL/GenBank/DDBJ databases">
        <title>MLK4, a new member of mixed lineage kinases.</title>
        <authorList>
            <person name="Kvasha S."/>
            <person name="Protopopov A."/>
            <person name="Rynditch A."/>
            <person name="Zabarovsky E."/>
            <person name="Kashuba V."/>
        </authorList>
    </citation>
    <scope>NUCLEOTIDE SEQUENCE [MRNA] (ISOFORMS 1 AND 2)</scope>
    <source>
        <tissue evidence="17">Heart</tissue>
    </source>
</reference>
<reference evidence="15 16" key="2">
    <citation type="journal article" date="2001" name="DNA Res.">
        <title>Prediction of the coding sequences of unidentified human genes. XX. The complete sequences of 100 new cDNA clones from brain which code for large proteins in vitro.</title>
        <authorList>
            <person name="Nagase T."/>
            <person name="Nakayama M."/>
            <person name="Nakajima D."/>
            <person name="Kikuno R."/>
            <person name="Ohara O."/>
        </authorList>
    </citation>
    <scope>NUCLEOTIDE SEQUENCE [LARGE SCALE MRNA] (ISOFORM 3)</scope>
    <source>
        <tissue evidence="16">Brain</tissue>
    </source>
</reference>
<reference key="3">
    <citation type="journal article" date="2006" name="Nature">
        <title>The DNA sequence and biological annotation of human chromosome 1.</title>
        <authorList>
            <person name="Gregory S.G."/>
            <person name="Barlow K.F."/>
            <person name="McLay K.E."/>
            <person name="Kaul R."/>
            <person name="Swarbreck D."/>
            <person name="Dunham A."/>
            <person name="Scott C.E."/>
            <person name="Howe K.L."/>
            <person name="Woodfine K."/>
            <person name="Spencer C.C.A."/>
            <person name="Jones M.C."/>
            <person name="Gillson C."/>
            <person name="Searle S."/>
            <person name="Zhou Y."/>
            <person name="Kokocinski F."/>
            <person name="McDonald L."/>
            <person name="Evans R."/>
            <person name="Phillips K."/>
            <person name="Atkinson A."/>
            <person name="Cooper R."/>
            <person name="Jones C."/>
            <person name="Hall R.E."/>
            <person name="Andrews T.D."/>
            <person name="Lloyd C."/>
            <person name="Ainscough R."/>
            <person name="Almeida J.P."/>
            <person name="Ambrose K.D."/>
            <person name="Anderson F."/>
            <person name="Andrew R.W."/>
            <person name="Ashwell R.I.S."/>
            <person name="Aubin K."/>
            <person name="Babbage A.K."/>
            <person name="Bagguley C.L."/>
            <person name="Bailey J."/>
            <person name="Beasley H."/>
            <person name="Bethel G."/>
            <person name="Bird C.P."/>
            <person name="Bray-Allen S."/>
            <person name="Brown J.Y."/>
            <person name="Brown A.J."/>
            <person name="Buckley D."/>
            <person name="Burton J."/>
            <person name="Bye J."/>
            <person name="Carder C."/>
            <person name="Chapman J.C."/>
            <person name="Clark S.Y."/>
            <person name="Clarke G."/>
            <person name="Clee C."/>
            <person name="Cobley V."/>
            <person name="Collier R.E."/>
            <person name="Corby N."/>
            <person name="Coville G.J."/>
            <person name="Davies J."/>
            <person name="Deadman R."/>
            <person name="Dunn M."/>
            <person name="Earthrowl M."/>
            <person name="Ellington A.G."/>
            <person name="Errington H."/>
            <person name="Frankish A."/>
            <person name="Frankland J."/>
            <person name="French L."/>
            <person name="Garner P."/>
            <person name="Garnett J."/>
            <person name="Gay L."/>
            <person name="Ghori M.R.J."/>
            <person name="Gibson R."/>
            <person name="Gilby L.M."/>
            <person name="Gillett W."/>
            <person name="Glithero R.J."/>
            <person name="Grafham D.V."/>
            <person name="Griffiths C."/>
            <person name="Griffiths-Jones S."/>
            <person name="Grocock R."/>
            <person name="Hammond S."/>
            <person name="Harrison E.S.I."/>
            <person name="Hart E."/>
            <person name="Haugen E."/>
            <person name="Heath P.D."/>
            <person name="Holmes S."/>
            <person name="Holt K."/>
            <person name="Howden P.J."/>
            <person name="Hunt A.R."/>
            <person name="Hunt S.E."/>
            <person name="Hunter G."/>
            <person name="Isherwood J."/>
            <person name="James R."/>
            <person name="Johnson C."/>
            <person name="Johnson D."/>
            <person name="Joy A."/>
            <person name="Kay M."/>
            <person name="Kershaw J.K."/>
            <person name="Kibukawa M."/>
            <person name="Kimberley A.M."/>
            <person name="King A."/>
            <person name="Knights A.J."/>
            <person name="Lad H."/>
            <person name="Laird G."/>
            <person name="Lawlor S."/>
            <person name="Leongamornlert D.A."/>
            <person name="Lloyd D.M."/>
            <person name="Loveland J."/>
            <person name="Lovell J."/>
            <person name="Lush M.J."/>
            <person name="Lyne R."/>
            <person name="Martin S."/>
            <person name="Mashreghi-Mohammadi M."/>
            <person name="Matthews L."/>
            <person name="Matthews N.S.W."/>
            <person name="McLaren S."/>
            <person name="Milne S."/>
            <person name="Mistry S."/>
            <person name="Moore M.J.F."/>
            <person name="Nickerson T."/>
            <person name="O'Dell C.N."/>
            <person name="Oliver K."/>
            <person name="Palmeiri A."/>
            <person name="Palmer S.A."/>
            <person name="Parker A."/>
            <person name="Patel D."/>
            <person name="Pearce A.V."/>
            <person name="Peck A.I."/>
            <person name="Pelan S."/>
            <person name="Phelps K."/>
            <person name="Phillimore B.J."/>
            <person name="Plumb R."/>
            <person name="Rajan J."/>
            <person name="Raymond C."/>
            <person name="Rouse G."/>
            <person name="Saenphimmachak C."/>
            <person name="Sehra H.K."/>
            <person name="Sheridan E."/>
            <person name="Shownkeen R."/>
            <person name="Sims S."/>
            <person name="Skuce C.D."/>
            <person name="Smith M."/>
            <person name="Steward C."/>
            <person name="Subramanian S."/>
            <person name="Sycamore N."/>
            <person name="Tracey A."/>
            <person name="Tromans A."/>
            <person name="Van Helmond Z."/>
            <person name="Wall M."/>
            <person name="Wallis J.M."/>
            <person name="White S."/>
            <person name="Whitehead S.L."/>
            <person name="Wilkinson J.E."/>
            <person name="Willey D.L."/>
            <person name="Williams H."/>
            <person name="Wilming L."/>
            <person name="Wray P.W."/>
            <person name="Wu Z."/>
            <person name="Coulson A."/>
            <person name="Vaudin M."/>
            <person name="Sulston J.E."/>
            <person name="Durbin R.M."/>
            <person name="Hubbard T."/>
            <person name="Wooster R."/>
            <person name="Dunham I."/>
            <person name="Carter N.P."/>
            <person name="McVean G."/>
            <person name="Ross M.T."/>
            <person name="Harrow J."/>
            <person name="Olson M.V."/>
            <person name="Beck S."/>
            <person name="Rogers J."/>
            <person name="Bentley D.R."/>
        </authorList>
    </citation>
    <scope>NUCLEOTIDE SEQUENCE [LARGE SCALE GENOMIC DNA]</scope>
</reference>
<reference evidence="15 18" key="4">
    <citation type="submission" date="2005-07" db="EMBL/GenBank/DDBJ databases">
        <authorList>
            <person name="Mural R.J."/>
            <person name="Istrail S."/>
            <person name="Sutton G.G."/>
            <person name="Florea L."/>
            <person name="Halpern A.L."/>
            <person name="Mobarry C.M."/>
            <person name="Lippert R."/>
            <person name="Walenz B."/>
            <person name="Shatkay H."/>
            <person name="Dew I."/>
            <person name="Miller J.R."/>
            <person name="Flanigan M.J."/>
            <person name="Edwards N.J."/>
            <person name="Bolanos R."/>
            <person name="Fasulo D."/>
            <person name="Halldorsson B.V."/>
            <person name="Hannenhalli S."/>
            <person name="Turner R."/>
            <person name="Yooseph S."/>
            <person name="Lu F."/>
            <person name="Nusskern D.R."/>
            <person name="Shue B.C."/>
            <person name="Zheng X.H."/>
            <person name="Zhong F."/>
            <person name="Delcher A.L."/>
            <person name="Huson D.H."/>
            <person name="Kravitz S.A."/>
            <person name="Mouchard L."/>
            <person name="Reinert K."/>
            <person name="Remington K.A."/>
            <person name="Clark A.G."/>
            <person name="Waterman M.S."/>
            <person name="Eichler E.E."/>
            <person name="Adams M.D."/>
            <person name="Hunkapiller M.W."/>
            <person name="Myers E.W."/>
            <person name="Venter J.C."/>
        </authorList>
    </citation>
    <scope>NUCLEOTIDE SEQUENCE [LARGE SCALE GENOMIC DNA]</scope>
</reference>
<reference key="5">
    <citation type="journal article" date="2004" name="Genome Res.">
        <title>The status, quality, and expansion of the NIH full-length cDNA project: the Mammalian Gene Collection (MGC).</title>
        <authorList>
            <consortium name="The MGC Project Team"/>
        </authorList>
    </citation>
    <scope>NUCLEOTIDE SEQUENCE [LARGE SCALE MRNA] (ISOFORM 1)</scope>
</reference>
<reference key="6">
    <citation type="journal article" date="2008" name="Mol. Cell">
        <title>Kinase-selective enrichment enables quantitative phosphoproteomics of the kinome across the cell cycle.</title>
        <authorList>
            <person name="Daub H."/>
            <person name="Olsen J.V."/>
            <person name="Bairlein M."/>
            <person name="Gnad F."/>
            <person name="Oppermann F.S."/>
            <person name="Korner R."/>
            <person name="Greff Z."/>
            <person name="Keri G."/>
            <person name="Stemmann O."/>
            <person name="Mann M."/>
        </authorList>
    </citation>
    <scope>PHOSPHORYLATION [LARGE SCALE ANALYSIS] AT SER-528</scope>
    <scope>IDENTIFICATION BY MASS SPECTROMETRY [LARGE SCALE ANALYSIS]</scope>
    <source>
        <tissue>Cervix carcinoma</tissue>
    </source>
</reference>
<reference key="7">
    <citation type="journal article" date="2008" name="Proc. Natl. Acad. Sci. U.S.A.">
        <title>A quantitative atlas of mitotic phosphorylation.</title>
        <authorList>
            <person name="Dephoure N."/>
            <person name="Zhou C."/>
            <person name="Villen J."/>
            <person name="Beausoleil S.A."/>
            <person name="Bakalarski C.E."/>
            <person name="Elledge S.J."/>
            <person name="Gygi S.P."/>
        </authorList>
    </citation>
    <scope>PHOSPHORYLATION [LARGE SCALE ANALYSIS] AT SER-614</scope>
    <scope>IDENTIFICATION BY MASS SPECTROMETRY [LARGE SCALE ANALYSIS]</scope>
    <source>
        <tissue>Cervix carcinoma</tissue>
    </source>
</reference>
<reference key="8">
    <citation type="journal article" date="2009" name="Anal. Chem.">
        <title>Lys-N and trypsin cover complementary parts of the phosphoproteome in a refined SCX-based approach.</title>
        <authorList>
            <person name="Gauci S."/>
            <person name="Helbig A.O."/>
            <person name="Slijper M."/>
            <person name="Krijgsveld J."/>
            <person name="Heck A.J."/>
            <person name="Mohammed S."/>
        </authorList>
    </citation>
    <scope>IDENTIFICATION BY MASS SPECTROMETRY [LARGE SCALE ANALYSIS]</scope>
</reference>
<reference key="9">
    <citation type="journal article" date="2009" name="Mol. Cell. Proteomics">
        <title>Large-scale proteomics analysis of the human kinome.</title>
        <authorList>
            <person name="Oppermann F.S."/>
            <person name="Gnad F."/>
            <person name="Olsen J.V."/>
            <person name="Hornberger R."/>
            <person name="Greff Z."/>
            <person name="Keri G."/>
            <person name="Mann M."/>
            <person name="Daub H."/>
        </authorList>
    </citation>
    <scope>PHOSPHORYLATION [LARGE SCALE ANALYSIS] AT SER-528; THR-592 AND SER-614</scope>
    <scope>IDENTIFICATION BY MASS SPECTROMETRY [LARGE SCALE ANALYSIS]</scope>
</reference>
<reference key="10">
    <citation type="journal article" date="2010" name="Sci. Signal.">
        <title>Quantitative phosphoproteomics reveals widespread full phosphorylation site occupancy during mitosis.</title>
        <authorList>
            <person name="Olsen J.V."/>
            <person name="Vermeulen M."/>
            <person name="Santamaria A."/>
            <person name="Kumar C."/>
            <person name="Miller M.L."/>
            <person name="Jensen L.J."/>
            <person name="Gnad F."/>
            <person name="Cox J."/>
            <person name="Jensen T.S."/>
            <person name="Nigg E.A."/>
            <person name="Brunak S."/>
            <person name="Mann M."/>
        </authorList>
    </citation>
    <scope>PHOSPHORYLATION [LARGE SCALE ANALYSIS] AT SER-528</scope>
    <scope>IDENTIFICATION BY MASS SPECTROMETRY [LARGE SCALE ANALYSIS]</scope>
    <source>
        <tissue>Cervix carcinoma</tissue>
    </source>
</reference>
<reference key="11">
    <citation type="journal article" date="2012" name="Cell. Mol. Immunol.">
        <title>MLK4 has negative effect on TLR4 signaling.</title>
        <authorList>
            <person name="Seit-Nebi A."/>
            <person name="Cheng W."/>
            <person name="Xu H."/>
            <person name="Han J."/>
        </authorList>
    </citation>
    <scope>FUNCTION</scope>
    <scope>INTERACTION WITH TLR4</scope>
</reference>
<reference key="12">
    <citation type="journal article" date="2013" name="J. Proteome Res.">
        <title>Toward a comprehensive characterization of a human cancer cell phosphoproteome.</title>
        <authorList>
            <person name="Zhou H."/>
            <person name="Di Palma S."/>
            <person name="Preisinger C."/>
            <person name="Peng M."/>
            <person name="Polat A.N."/>
            <person name="Heck A.J."/>
            <person name="Mohammed S."/>
        </authorList>
    </citation>
    <scope>PHOSPHORYLATION [LARGE SCALE ANALYSIS] AT SER-528 AND SER-614</scope>
    <scope>IDENTIFICATION BY MASS SPECTROMETRY [LARGE SCALE ANALYSIS]</scope>
    <source>
        <tissue>Cervix carcinoma</tissue>
    </source>
</reference>
<reference key="13">
    <citation type="journal article" date="2007" name="Nature">
        <title>Patterns of somatic mutation in human cancer genomes.</title>
        <authorList>
            <person name="Greenman C."/>
            <person name="Stephens P."/>
            <person name="Smith R."/>
            <person name="Dalgliesh G.L."/>
            <person name="Hunter C."/>
            <person name="Bignell G."/>
            <person name="Davies H."/>
            <person name="Teague J."/>
            <person name="Butler A."/>
            <person name="Stevens C."/>
            <person name="Edkins S."/>
            <person name="O'Meara S."/>
            <person name="Vastrik I."/>
            <person name="Schmidt E.E."/>
            <person name="Avis T."/>
            <person name="Barthorpe S."/>
            <person name="Bhamra G."/>
            <person name="Buck G."/>
            <person name="Choudhury B."/>
            <person name="Clements J."/>
            <person name="Cole J."/>
            <person name="Dicks E."/>
            <person name="Forbes S."/>
            <person name="Gray K."/>
            <person name="Halliday K."/>
            <person name="Harrison R."/>
            <person name="Hills K."/>
            <person name="Hinton J."/>
            <person name="Jenkinson A."/>
            <person name="Jones D."/>
            <person name="Menzies A."/>
            <person name="Mironenko T."/>
            <person name="Perry J."/>
            <person name="Raine K."/>
            <person name="Richardson D."/>
            <person name="Shepherd R."/>
            <person name="Small A."/>
            <person name="Tofts C."/>
            <person name="Varian J."/>
            <person name="Webb T."/>
            <person name="West S."/>
            <person name="Widaa S."/>
            <person name="Yates A."/>
            <person name="Cahill D.P."/>
            <person name="Louis D.N."/>
            <person name="Goldstraw P."/>
            <person name="Nicholson A.G."/>
            <person name="Brasseur F."/>
            <person name="Looijenga L."/>
            <person name="Weber B.L."/>
            <person name="Chiew Y.-E."/>
            <person name="DeFazio A."/>
            <person name="Greaves M.F."/>
            <person name="Green A.R."/>
            <person name="Campbell P."/>
            <person name="Birney E."/>
            <person name="Easton D.F."/>
            <person name="Chenevix-Trench G."/>
            <person name="Tan M.-H."/>
            <person name="Khoo S.K."/>
            <person name="Teh B.T."/>
            <person name="Yuen S.T."/>
            <person name="Leung S.Y."/>
            <person name="Wooster R."/>
            <person name="Futreal P.A."/>
            <person name="Stratton M.R."/>
        </authorList>
    </citation>
    <scope>VARIANTS [LARGE SCALE ANALYSIS] ASN-420; ASP-563; PHE-597; ILE-728; ASP-741; GLY-784; TRP-892; ILE-900; CYS-977 AND LEU-982</scope>
</reference>
<proteinExistence type="evidence at protein level"/>
<keyword id="KW-0002">3D-structure</keyword>
<keyword id="KW-0025">Alternative splicing</keyword>
<keyword id="KW-0067">ATP-binding</keyword>
<keyword id="KW-0418">Kinase</keyword>
<keyword id="KW-0547">Nucleotide-binding</keyword>
<keyword id="KW-0597">Phosphoprotein</keyword>
<keyword id="KW-1267">Proteomics identification</keyword>
<keyword id="KW-1185">Reference proteome</keyword>
<keyword id="KW-0677">Repeat</keyword>
<keyword id="KW-0723">Serine/threonine-protein kinase</keyword>
<keyword id="KW-0728">SH3 domain</keyword>
<keyword id="KW-0808">Transferase</keyword>
<comment type="function">
    <text evidence="11">Negative regulator of TLR4 signaling. Does not activate JNK1/MAPK8 pathway, p38/MAPK14, nor ERK2/MAPK1 pathways.</text>
</comment>
<comment type="catalytic activity">
    <reaction evidence="15">
        <text>L-seryl-[protein] + ATP = O-phospho-L-seryl-[protein] + ADP + H(+)</text>
        <dbReference type="Rhea" id="RHEA:17989"/>
        <dbReference type="Rhea" id="RHEA-COMP:9863"/>
        <dbReference type="Rhea" id="RHEA-COMP:11604"/>
        <dbReference type="ChEBI" id="CHEBI:15378"/>
        <dbReference type="ChEBI" id="CHEBI:29999"/>
        <dbReference type="ChEBI" id="CHEBI:30616"/>
        <dbReference type="ChEBI" id="CHEBI:83421"/>
        <dbReference type="ChEBI" id="CHEBI:456216"/>
        <dbReference type="EC" id="2.7.11.25"/>
    </reaction>
</comment>
<comment type="catalytic activity">
    <reaction evidence="15">
        <text>L-threonyl-[protein] + ATP = O-phospho-L-threonyl-[protein] + ADP + H(+)</text>
        <dbReference type="Rhea" id="RHEA:46608"/>
        <dbReference type="Rhea" id="RHEA-COMP:11060"/>
        <dbReference type="Rhea" id="RHEA-COMP:11605"/>
        <dbReference type="ChEBI" id="CHEBI:15378"/>
        <dbReference type="ChEBI" id="CHEBI:30013"/>
        <dbReference type="ChEBI" id="CHEBI:30616"/>
        <dbReference type="ChEBI" id="CHEBI:61977"/>
        <dbReference type="ChEBI" id="CHEBI:456216"/>
        <dbReference type="EC" id="2.7.11.25"/>
    </reaction>
</comment>
<comment type="cofactor">
    <cofactor evidence="2">
        <name>Mg(2+)</name>
        <dbReference type="ChEBI" id="CHEBI:18420"/>
    </cofactor>
</comment>
<comment type="activity regulation">
    <text evidence="4">Homodimerization via the leucine zipper domains is required for autophosphorylation and subsequent activation.</text>
</comment>
<comment type="subunit">
    <text evidence="1 11">Homodimer (By similarity). Interacts with TLR4.</text>
</comment>
<comment type="interaction">
    <interactant intactId="EBI-1057380">
        <id>Q5TCX8</id>
    </interactant>
    <interactant intactId="EBI-81249">
        <id>O15111</id>
        <label>CHUK</label>
    </interactant>
    <organismsDiffer>false</organismsDiffer>
    <experiments>2</experiments>
</comment>
<comment type="interaction">
    <interactant intactId="EBI-1057380">
        <id>Q5TCX8</id>
    </interactant>
    <interactant intactId="EBI-3392815">
        <id>Q02779</id>
        <label>MAP3K10</label>
    </interactant>
    <organismsDiffer>false</organismsDiffer>
    <experiments>3</experiments>
</comment>
<comment type="alternative products">
    <event type="alternative splicing"/>
    <isoform>
        <id>Q5TCX8-1</id>
        <name evidence="12">1</name>
        <name>MLK4beta</name>
        <sequence type="displayed"/>
    </isoform>
    <isoform>
        <id>Q5TCX8-2</id>
        <name evidence="12">2</name>
        <name>MLK4alpha</name>
        <sequence type="described" ref="VSP_051733 VSP_051734"/>
    </isoform>
    <isoform>
        <id>Q5TCX8-3</id>
        <name>3</name>
        <sequence type="described" ref="VSP_051731 VSP_051732"/>
    </isoform>
</comment>
<comment type="PTM">
    <text evidence="4">Autophosphorylation on serine and threonine residues within the activation loop plays a role in enzyme activation.</text>
</comment>
<comment type="similarity">
    <text evidence="15">Belongs to the protein kinase superfamily. STE Ser/Thr protein kinase family. MAP kinase kinase kinase subfamily.</text>
</comment>
<comment type="sequence caution" evidence="15">
    <conflict type="erroneous initiation">
        <sequence resource="EMBL-CDS" id="BAB47433"/>
    </conflict>
    <text>Extended N-terminus.</text>
</comment>